<comment type="miscellaneous">
    <text>This sequence was translated from an mRNA isolated from a myeloma that secretes IgG2b.</text>
</comment>
<dbReference type="PIR" id="A93708">
    <property type="entry name" value="GVMS11"/>
</dbReference>
<dbReference type="SMR" id="P01745"/>
<dbReference type="FunCoup" id="P01745">
    <property type="interactions" value="197"/>
</dbReference>
<dbReference type="InParanoid" id="P01745"/>
<dbReference type="Proteomes" id="UP000000589">
    <property type="component" value="Unplaced"/>
</dbReference>
<dbReference type="RNAct" id="P01745">
    <property type="molecule type" value="protein"/>
</dbReference>
<dbReference type="GO" id="GO:0005576">
    <property type="term" value="C:extracellular region"/>
    <property type="evidence" value="ECO:0007669"/>
    <property type="project" value="UniProtKB-ARBA"/>
</dbReference>
<dbReference type="GO" id="GO:0019814">
    <property type="term" value="C:immunoglobulin complex"/>
    <property type="evidence" value="ECO:0007669"/>
    <property type="project" value="UniProtKB-KW"/>
</dbReference>
<dbReference type="GO" id="GO:0003823">
    <property type="term" value="F:antigen binding"/>
    <property type="evidence" value="ECO:0000318"/>
    <property type="project" value="GO_Central"/>
</dbReference>
<dbReference type="GO" id="GO:0016064">
    <property type="term" value="P:immunoglobulin mediated immune response"/>
    <property type="evidence" value="ECO:0000318"/>
    <property type="project" value="GO_Central"/>
</dbReference>
<dbReference type="CDD" id="cd04981">
    <property type="entry name" value="IgV_H"/>
    <property type="match status" value="1"/>
</dbReference>
<dbReference type="FunFam" id="2.60.40.10:FF:001126">
    <property type="entry name" value="Anti-myosin immunoglobulin heavy chain variable region"/>
    <property type="match status" value="1"/>
</dbReference>
<dbReference type="Gene3D" id="2.60.40.10">
    <property type="entry name" value="Immunoglobulins"/>
    <property type="match status" value="1"/>
</dbReference>
<dbReference type="InterPro" id="IPR007110">
    <property type="entry name" value="Ig-like_dom"/>
</dbReference>
<dbReference type="InterPro" id="IPR036179">
    <property type="entry name" value="Ig-like_dom_sf"/>
</dbReference>
<dbReference type="InterPro" id="IPR013783">
    <property type="entry name" value="Ig-like_fold"/>
</dbReference>
<dbReference type="InterPro" id="IPR003599">
    <property type="entry name" value="Ig_sub"/>
</dbReference>
<dbReference type="InterPro" id="IPR013106">
    <property type="entry name" value="Ig_V-set"/>
</dbReference>
<dbReference type="InterPro" id="IPR050199">
    <property type="entry name" value="IgHV"/>
</dbReference>
<dbReference type="PANTHER" id="PTHR23266">
    <property type="entry name" value="IMMUNOGLOBULIN HEAVY CHAIN"/>
    <property type="match status" value="1"/>
</dbReference>
<dbReference type="Pfam" id="PF07686">
    <property type="entry name" value="V-set"/>
    <property type="match status" value="1"/>
</dbReference>
<dbReference type="SMART" id="SM00409">
    <property type="entry name" value="IG"/>
    <property type="match status" value="1"/>
</dbReference>
<dbReference type="SMART" id="SM00406">
    <property type="entry name" value="IGv"/>
    <property type="match status" value="1"/>
</dbReference>
<dbReference type="SUPFAM" id="SSF48726">
    <property type="entry name" value="Immunoglobulin"/>
    <property type="match status" value="1"/>
</dbReference>
<dbReference type="PROSITE" id="PS50835">
    <property type="entry name" value="IG_LIKE"/>
    <property type="match status" value="1"/>
</dbReference>
<organism>
    <name type="scientific">Mus musculus</name>
    <name type="common">Mouse</name>
    <dbReference type="NCBI Taxonomy" id="10090"/>
    <lineage>
        <taxon>Eukaryota</taxon>
        <taxon>Metazoa</taxon>
        <taxon>Chordata</taxon>
        <taxon>Craniata</taxon>
        <taxon>Vertebrata</taxon>
        <taxon>Euteleostomi</taxon>
        <taxon>Mammalia</taxon>
        <taxon>Eutheria</taxon>
        <taxon>Euarchontoglires</taxon>
        <taxon>Glires</taxon>
        <taxon>Rodentia</taxon>
        <taxon>Myomorpha</taxon>
        <taxon>Muroidea</taxon>
        <taxon>Muridae</taxon>
        <taxon>Murinae</taxon>
        <taxon>Mus</taxon>
        <taxon>Mus</taxon>
    </lineage>
</organism>
<protein>
    <recommendedName>
        <fullName>Ig heavy chain V region MPC 11</fullName>
    </recommendedName>
</protein>
<reference key="1">
    <citation type="journal article" date="1980" name="Nucleic Acids Res.">
        <title>Cloning and sequence of the cDNA corresponding to the variable region of immunoglobulin heavy chain MPC11.</title>
        <authorList>
            <person name="Zakut R."/>
            <person name="Cohen J."/>
            <person name="Givol D."/>
        </authorList>
    </citation>
    <scope>NUCLEOTIDE SEQUENCE</scope>
</reference>
<reference key="2">
    <citation type="journal article" date="1980" name="Nucleic Acids Res.">
        <authorList>
            <person name="Zakut R."/>
            <person name="Cohen J."/>
            <person name="Givol D."/>
        </authorList>
    </citation>
    <scope>ERRATUM OF PUBMED:6253904</scope>
    <scope>SEQUENCE REVISION</scope>
</reference>
<keyword id="KW-1064">Adaptive immunity</keyword>
<keyword id="KW-0391">Immunity</keyword>
<keyword id="KW-1280">Immunoglobulin</keyword>
<keyword id="KW-1185">Reference proteome</keyword>
<proteinExistence type="predicted"/>
<sequence>EAQLQQSGAELVRPGTSVKISCKAAGYTFTNYWIGWVKERPGHGLEWIGDIYPGGGFTNYNDNLKGKATLTADTSSSTAYIQLSSLTSEDSAIYHCARGIYYNSSPYFDSWGQGTTLTVSS</sequence>
<feature type="chain" id="PRO_0000059868" description="Ig heavy chain V region MPC 11">
    <location>
        <begin position="1"/>
        <end position="121" status="greater than"/>
    </location>
</feature>
<feature type="domain" description="Ig-like">
    <location>
        <begin position="1"/>
        <end position="112"/>
    </location>
</feature>
<feature type="non-terminal residue">
    <location>
        <position position="121"/>
    </location>
</feature>
<accession>P01745</accession>
<name>HVM01_MOUSE</name>